<name>SYA_NITWN</name>
<feature type="chain" id="PRO_0000347699" description="Alanine--tRNA ligase">
    <location>
        <begin position="1"/>
        <end position="891"/>
    </location>
</feature>
<feature type="binding site" evidence="1">
    <location>
        <position position="564"/>
    </location>
    <ligand>
        <name>Zn(2+)</name>
        <dbReference type="ChEBI" id="CHEBI:29105"/>
    </ligand>
</feature>
<feature type="binding site" evidence="1">
    <location>
        <position position="568"/>
    </location>
    <ligand>
        <name>Zn(2+)</name>
        <dbReference type="ChEBI" id="CHEBI:29105"/>
    </ligand>
</feature>
<feature type="binding site" evidence="1">
    <location>
        <position position="678"/>
    </location>
    <ligand>
        <name>Zn(2+)</name>
        <dbReference type="ChEBI" id="CHEBI:29105"/>
    </ligand>
</feature>
<feature type="binding site" evidence="1">
    <location>
        <position position="682"/>
    </location>
    <ligand>
        <name>Zn(2+)</name>
        <dbReference type="ChEBI" id="CHEBI:29105"/>
    </ligand>
</feature>
<sequence length="891" mass="95706">MSGVNDIRSAFLNYFAANGHQIVPSSPLVPRNDPTLMFTNAGMVQFKNVFTGVEKRPYQRATTSQKCVRAGGKHNDLDNVGYTARHHTFFEMLGNFSFGDYFKDRAIELAWKLVTQEFGLPKDRLTATVYIDDDGAFDLWKKIAGLPESRIIRIAGSDNFWQMGDTGPCGPCSEIFYDHGDRIPGGPPGSPEQDGDRFVEIWNLVFMQYEKLPDGSRPNLPKPSIDTGAGLERVAAVLQGKHDNYDIDLFVALIRAAADLTGADPQGPMKASLRVIADHLRASSFLIADGVLPSNEGRGYVLRRIMRRAMRHAQLLGAREPLMWRLVGVLVREMGEAFPELQRARPLIEETLRLEETRFRKTLERGLSILDEKSASLKQGDMFDGETAFTLYDTYGFPLDLTQDALRARGIGVDLASFTDAMEQQKAKARASWSGSGEAAAESIWFPLREKLGATEFLGYETEAAEGVVAALVKDGEEADTLKAGESGAIVLNQTPFYGESGGQVGDTGFLIADGVRFRVTDTQKKAGDLFVHLGTVEQGVLAPGMALALEVDHDRRSAIRANHSATHLLHEALRQVLGDHIAQRGSLVAPERLRFDFAHNKPISADELRCIEDIANDVVLENGEVTTRLMAVDDAREAGARALFGEKYGDEVRVVSMGGTDRHGAASNALGWSVELCGGTHVKRTGDIGLISVVGESAVASGVRRIEALTGHQARHHANHAIQLAKTAAGELRTSLDDMPARIASLMEERKKLERELSEARKKLAMGGAASASSGATTGVRDVGGIKLMARSVEGIEIKDLKSLADQGKKQLGSGVVALVATSGDGKASVVVGVTPDLVTRFSAVDLVRKASEVLGGKGGGGKPDMAQAGGPDGAKAGAALDAIAAAMGA</sequence>
<dbReference type="EC" id="6.1.1.7" evidence="1"/>
<dbReference type="EMBL" id="CP000115">
    <property type="protein sequence ID" value="ABA04548.1"/>
    <property type="molecule type" value="Genomic_DNA"/>
</dbReference>
<dbReference type="RefSeq" id="WP_011314574.1">
    <property type="nucleotide sequence ID" value="NC_007406.1"/>
</dbReference>
<dbReference type="SMR" id="Q3ST43"/>
<dbReference type="STRING" id="323098.Nwi_1287"/>
<dbReference type="KEGG" id="nwi:Nwi_1287"/>
<dbReference type="eggNOG" id="COG0013">
    <property type="taxonomic scope" value="Bacteria"/>
</dbReference>
<dbReference type="HOGENOM" id="CLU_004485_1_1_5"/>
<dbReference type="OrthoDB" id="9803884at2"/>
<dbReference type="Proteomes" id="UP000002531">
    <property type="component" value="Chromosome"/>
</dbReference>
<dbReference type="GO" id="GO:0005829">
    <property type="term" value="C:cytosol"/>
    <property type="evidence" value="ECO:0007669"/>
    <property type="project" value="TreeGrafter"/>
</dbReference>
<dbReference type="GO" id="GO:0004813">
    <property type="term" value="F:alanine-tRNA ligase activity"/>
    <property type="evidence" value="ECO:0007669"/>
    <property type="project" value="UniProtKB-UniRule"/>
</dbReference>
<dbReference type="GO" id="GO:0002161">
    <property type="term" value="F:aminoacyl-tRNA deacylase activity"/>
    <property type="evidence" value="ECO:0007669"/>
    <property type="project" value="TreeGrafter"/>
</dbReference>
<dbReference type="GO" id="GO:0005524">
    <property type="term" value="F:ATP binding"/>
    <property type="evidence" value="ECO:0007669"/>
    <property type="project" value="UniProtKB-UniRule"/>
</dbReference>
<dbReference type="GO" id="GO:0000049">
    <property type="term" value="F:tRNA binding"/>
    <property type="evidence" value="ECO:0007669"/>
    <property type="project" value="UniProtKB-KW"/>
</dbReference>
<dbReference type="GO" id="GO:0008270">
    <property type="term" value="F:zinc ion binding"/>
    <property type="evidence" value="ECO:0007669"/>
    <property type="project" value="UniProtKB-UniRule"/>
</dbReference>
<dbReference type="GO" id="GO:0006419">
    <property type="term" value="P:alanyl-tRNA aminoacylation"/>
    <property type="evidence" value="ECO:0007669"/>
    <property type="project" value="UniProtKB-UniRule"/>
</dbReference>
<dbReference type="GO" id="GO:0045892">
    <property type="term" value="P:negative regulation of DNA-templated transcription"/>
    <property type="evidence" value="ECO:0007669"/>
    <property type="project" value="TreeGrafter"/>
</dbReference>
<dbReference type="CDD" id="cd00673">
    <property type="entry name" value="AlaRS_core"/>
    <property type="match status" value="1"/>
</dbReference>
<dbReference type="FunFam" id="2.40.30.130:FF:000001">
    <property type="entry name" value="Alanine--tRNA ligase"/>
    <property type="match status" value="1"/>
</dbReference>
<dbReference type="FunFam" id="3.10.310.40:FF:000001">
    <property type="entry name" value="Alanine--tRNA ligase"/>
    <property type="match status" value="1"/>
</dbReference>
<dbReference type="FunFam" id="3.30.54.20:FF:000001">
    <property type="entry name" value="Alanine--tRNA ligase"/>
    <property type="match status" value="1"/>
</dbReference>
<dbReference type="FunFam" id="3.30.930.10:FF:000004">
    <property type="entry name" value="Alanine--tRNA ligase"/>
    <property type="match status" value="1"/>
</dbReference>
<dbReference type="FunFam" id="3.30.980.10:FF:000004">
    <property type="entry name" value="Alanine--tRNA ligase, cytoplasmic"/>
    <property type="match status" value="1"/>
</dbReference>
<dbReference type="Gene3D" id="2.40.30.130">
    <property type="match status" value="1"/>
</dbReference>
<dbReference type="Gene3D" id="3.10.310.40">
    <property type="match status" value="1"/>
</dbReference>
<dbReference type="Gene3D" id="3.30.54.20">
    <property type="match status" value="1"/>
</dbReference>
<dbReference type="Gene3D" id="6.10.250.550">
    <property type="match status" value="1"/>
</dbReference>
<dbReference type="Gene3D" id="3.30.930.10">
    <property type="entry name" value="Bira Bifunctional Protein, Domain 2"/>
    <property type="match status" value="1"/>
</dbReference>
<dbReference type="Gene3D" id="3.30.980.10">
    <property type="entry name" value="Threonyl-trna Synthetase, Chain A, domain 2"/>
    <property type="match status" value="1"/>
</dbReference>
<dbReference type="HAMAP" id="MF_00036_B">
    <property type="entry name" value="Ala_tRNA_synth_B"/>
    <property type="match status" value="1"/>
</dbReference>
<dbReference type="InterPro" id="IPR045864">
    <property type="entry name" value="aa-tRNA-synth_II/BPL/LPL"/>
</dbReference>
<dbReference type="InterPro" id="IPR002318">
    <property type="entry name" value="Ala-tRNA-lgiase_IIc"/>
</dbReference>
<dbReference type="InterPro" id="IPR018162">
    <property type="entry name" value="Ala-tRNA-ligase_IIc_anticod-bd"/>
</dbReference>
<dbReference type="InterPro" id="IPR018165">
    <property type="entry name" value="Ala-tRNA-synth_IIc_core"/>
</dbReference>
<dbReference type="InterPro" id="IPR018164">
    <property type="entry name" value="Ala-tRNA-synth_IIc_N"/>
</dbReference>
<dbReference type="InterPro" id="IPR050058">
    <property type="entry name" value="Ala-tRNA_ligase"/>
</dbReference>
<dbReference type="InterPro" id="IPR023033">
    <property type="entry name" value="Ala_tRNA_ligase_euk/bac"/>
</dbReference>
<dbReference type="InterPro" id="IPR003156">
    <property type="entry name" value="DHHA1_dom"/>
</dbReference>
<dbReference type="InterPro" id="IPR018163">
    <property type="entry name" value="Thr/Ala-tRNA-synth_IIc_edit"/>
</dbReference>
<dbReference type="InterPro" id="IPR009000">
    <property type="entry name" value="Transl_B-barrel_sf"/>
</dbReference>
<dbReference type="InterPro" id="IPR012947">
    <property type="entry name" value="tRNA_SAD"/>
</dbReference>
<dbReference type="NCBIfam" id="TIGR00344">
    <property type="entry name" value="alaS"/>
    <property type="match status" value="1"/>
</dbReference>
<dbReference type="PANTHER" id="PTHR11777:SF9">
    <property type="entry name" value="ALANINE--TRNA LIGASE, CYTOPLASMIC"/>
    <property type="match status" value="1"/>
</dbReference>
<dbReference type="PANTHER" id="PTHR11777">
    <property type="entry name" value="ALANYL-TRNA SYNTHETASE"/>
    <property type="match status" value="1"/>
</dbReference>
<dbReference type="Pfam" id="PF02272">
    <property type="entry name" value="DHHA1"/>
    <property type="match status" value="1"/>
</dbReference>
<dbReference type="Pfam" id="PF01411">
    <property type="entry name" value="tRNA-synt_2c"/>
    <property type="match status" value="1"/>
</dbReference>
<dbReference type="Pfam" id="PF07973">
    <property type="entry name" value="tRNA_SAD"/>
    <property type="match status" value="1"/>
</dbReference>
<dbReference type="PRINTS" id="PR00980">
    <property type="entry name" value="TRNASYNTHALA"/>
</dbReference>
<dbReference type="SMART" id="SM00863">
    <property type="entry name" value="tRNA_SAD"/>
    <property type="match status" value="1"/>
</dbReference>
<dbReference type="SUPFAM" id="SSF55681">
    <property type="entry name" value="Class II aaRS and biotin synthetases"/>
    <property type="match status" value="1"/>
</dbReference>
<dbReference type="SUPFAM" id="SSF101353">
    <property type="entry name" value="Putative anticodon-binding domain of alanyl-tRNA synthetase (AlaRS)"/>
    <property type="match status" value="1"/>
</dbReference>
<dbReference type="SUPFAM" id="SSF55186">
    <property type="entry name" value="ThrRS/AlaRS common domain"/>
    <property type="match status" value="1"/>
</dbReference>
<dbReference type="SUPFAM" id="SSF50447">
    <property type="entry name" value="Translation proteins"/>
    <property type="match status" value="1"/>
</dbReference>
<dbReference type="PROSITE" id="PS50860">
    <property type="entry name" value="AA_TRNA_LIGASE_II_ALA"/>
    <property type="match status" value="1"/>
</dbReference>
<accession>Q3ST43</accession>
<gene>
    <name evidence="1" type="primary">alaS</name>
    <name type="ordered locus">Nwi_1287</name>
</gene>
<keyword id="KW-0030">Aminoacyl-tRNA synthetase</keyword>
<keyword id="KW-0067">ATP-binding</keyword>
<keyword id="KW-0963">Cytoplasm</keyword>
<keyword id="KW-0436">Ligase</keyword>
<keyword id="KW-0479">Metal-binding</keyword>
<keyword id="KW-0547">Nucleotide-binding</keyword>
<keyword id="KW-0648">Protein biosynthesis</keyword>
<keyword id="KW-1185">Reference proteome</keyword>
<keyword id="KW-0694">RNA-binding</keyword>
<keyword id="KW-0820">tRNA-binding</keyword>
<keyword id="KW-0862">Zinc</keyword>
<protein>
    <recommendedName>
        <fullName evidence="1">Alanine--tRNA ligase</fullName>
        <ecNumber evidence="1">6.1.1.7</ecNumber>
    </recommendedName>
    <alternativeName>
        <fullName evidence="1">Alanyl-tRNA synthetase</fullName>
        <shortName evidence="1">AlaRS</shortName>
    </alternativeName>
</protein>
<organism>
    <name type="scientific">Nitrobacter winogradskyi (strain ATCC 25391 / DSM 10237 / CIP 104748 / NCIMB 11846 / Nb-255)</name>
    <dbReference type="NCBI Taxonomy" id="323098"/>
    <lineage>
        <taxon>Bacteria</taxon>
        <taxon>Pseudomonadati</taxon>
        <taxon>Pseudomonadota</taxon>
        <taxon>Alphaproteobacteria</taxon>
        <taxon>Hyphomicrobiales</taxon>
        <taxon>Nitrobacteraceae</taxon>
        <taxon>Nitrobacter</taxon>
    </lineage>
</organism>
<proteinExistence type="inferred from homology"/>
<evidence type="ECO:0000255" key="1">
    <source>
        <dbReference type="HAMAP-Rule" id="MF_00036"/>
    </source>
</evidence>
<reference key="1">
    <citation type="journal article" date="2006" name="Appl. Environ. Microbiol.">
        <title>Genome sequence of the chemolithoautotrophic nitrite-oxidizing bacterium Nitrobacter winogradskyi Nb-255.</title>
        <authorList>
            <person name="Starkenburg S.R."/>
            <person name="Chain P.S.G."/>
            <person name="Sayavedra-Soto L.A."/>
            <person name="Hauser L."/>
            <person name="Land M.L."/>
            <person name="Larimer F.W."/>
            <person name="Malfatti S.A."/>
            <person name="Klotz M.G."/>
            <person name="Bottomley P.J."/>
            <person name="Arp D.J."/>
            <person name="Hickey W.J."/>
        </authorList>
    </citation>
    <scope>NUCLEOTIDE SEQUENCE [LARGE SCALE GENOMIC DNA]</scope>
    <source>
        <strain>ATCC 25391 / DSM 10237 / CIP 104748 / NCIMB 11846 / Nb-255</strain>
    </source>
</reference>
<comment type="function">
    <text evidence="1">Catalyzes the attachment of alanine to tRNA(Ala) in a two-step reaction: alanine is first activated by ATP to form Ala-AMP and then transferred to the acceptor end of tRNA(Ala). Also edits incorrectly charged Ser-tRNA(Ala) and Gly-tRNA(Ala) via its editing domain.</text>
</comment>
<comment type="catalytic activity">
    <reaction evidence="1">
        <text>tRNA(Ala) + L-alanine + ATP = L-alanyl-tRNA(Ala) + AMP + diphosphate</text>
        <dbReference type="Rhea" id="RHEA:12540"/>
        <dbReference type="Rhea" id="RHEA-COMP:9657"/>
        <dbReference type="Rhea" id="RHEA-COMP:9923"/>
        <dbReference type="ChEBI" id="CHEBI:30616"/>
        <dbReference type="ChEBI" id="CHEBI:33019"/>
        <dbReference type="ChEBI" id="CHEBI:57972"/>
        <dbReference type="ChEBI" id="CHEBI:78442"/>
        <dbReference type="ChEBI" id="CHEBI:78497"/>
        <dbReference type="ChEBI" id="CHEBI:456215"/>
        <dbReference type="EC" id="6.1.1.7"/>
    </reaction>
</comment>
<comment type="cofactor">
    <cofactor evidence="1">
        <name>Zn(2+)</name>
        <dbReference type="ChEBI" id="CHEBI:29105"/>
    </cofactor>
    <text evidence="1">Binds 1 zinc ion per subunit.</text>
</comment>
<comment type="subcellular location">
    <subcellularLocation>
        <location evidence="1">Cytoplasm</location>
    </subcellularLocation>
</comment>
<comment type="domain">
    <text evidence="1">Consists of three domains; the N-terminal catalytic domain, the editing domain and the C-terminal C-Ala domain. The editing domain removes incorrectly charged amino acids, while the C-Ala domain, along with tRNA(Ala), serves as a bridge to cooperatively bring together the editing and aminoacylation centers thus stimulating deacylation of misacylated tRNAs.</text>
</comment>
<comment type="similarity">
    <text evidence="1">Belongs to the class-II aminoacyl-tRNA synthetase family.</text>
</comment>